<comment type="function">
    <text evidence="1">An accessory protein needed during the final step in the assembly of 30S ribosomal subunit, possibly for assembly of the head region. Essential for efficient processing of 16S rRNA. May be needed both before and after RbfA during the maturation of 16S rRNA. It has affinity for free ribosomal 30S subunits but not for 70S ribosomes.</text>
</comment>
<comment type="subunit">
    <text evidence="1">Binds ribosomal protein uS19.</text>
</comment>
<comment type="subcellular location">
    <subcellularLocation>
        <location evidence="1">Cytoplasm</location>
    </subcellularLocation>
</comment>
<comment type="domain">
    <text evidence="1">The PRC barrel domain binds ribosomal protein uS19.</text>
</comment>
<comment type="similarity">
    <text evidence="1">Belongs to the RimM family.</text>
</comment>
<accession>A0QV39</accession>
<accession>I7G896</accession>
<sequence>MDLVVGRVVKAHGISGEVVVEIRTDDPEARFAPGAVLRGRPRSGAEREYTIESVRAHGGRLLVRLAGVADRNGADELRGTVFLVDTAELPAIDDPDEFYDHELEGMRVVTVDDAPVGKVAEVLHTAGGEILAVKADEGGREILVPFVGAIVTSVSRQNATIVIDPPEGLLDLA</sequence>
<protein>
    <recommendedName>
        <fullName evidence="1">Ribosome maturation factor RimM</fullName>
    </recommendedName>
</protein>
<evidence type="ECO:0000255" key="1">
    <source>
        <dbReference type="HAMAP-Rule" id="MF_00014"/>
    </source>
</evidence>
<organism>
    <name type="scientific">Mycolicibacterium smegmatis (strain ATCC 700084 / mc(2)155)</name>
    <name type="common">Mycobacterium smegmatis</name>
    <dbReference type="NCBI Taxonomy" id="246196"/>
    <lineage>
        <taxon>Bacteria</taxon>
        <taxon>Bacillati</taxon>
        <taxon>Actinomycetota</taxon>
        <taxon>Actinomycetes</taxon>
        <taxon>Mycobacteriales</taxon>
        <taxon>Mycobacteriaceae</taxon>
        <taxon>Mycolicibacterium</taxon>
    </lineage>
</organism>
<name>RIMM_MYCS2</name>
<reference key="1">
    <citation type="submission" date="2006-10" db="EMBL/GenBank/DDBJ databases">
        <authorList>
            <person name="Fleischmann R.D."/>
            <person name="Dodson R.J."/>
            <person name="Haft D.H."/>
            <person name="Merkel J.S."/>
            <person name="Nelson W.C."/>
            <person name="Fraser C.M."/>
        </authorList>
    </citation>
    <scope>NUCLEOTIDE SEQUENCE [LARGE SCALE GENOMIC DNA]</scope>
    <source>
        <strain>ATCC 700084 / mc(2)155</strain>
    </source>
</reference>
<reference key="2">
    <citation type="journal article" date="2007" name="Genome Biol.">
        <title>Interrupted coding sequences in Mycobacterium smegmatis: authentic mutations or sequencing errors?</title>
        <authorList>
            <person name="Deshayes C."/>
            <person name="Perrodou E."/>
            <person name="Gallien S."/>
            <person name="Euphrasie D."/>
            <person name="Schaeffer C."/>
            <person name="Van-Dorsselaer A."/>
            <person name="Poch O."/>
            <person name="Lecompte O."/>
            <person name="Reyrat J.-M."/>
        </authorList>
    </citation>
    <scope>NUCLEOTIDE SEQUENCE [LARGE SCALE GENOMIC DNA]</scope>
    <source>
        <strain>ATCC 700084 / mc(2)155</strain>
    </source>
</reference>
<reference key="3">
    <citation type="journal article" date="2009" name="Genome Res.">
        <title>Ortho-proteogenomics: multiple proteomes investigation through orthology and a new MS-based protocol.</title>
        <authorList>
            <person name="Gallien S."/>
            <person name="Perrodou E."/>
            <person name="Carapito C."/>
            <person name="Deshayes C."/>
            <person name="Reyrat J.-M."/>
            <person name="Van Dorsselaer A."/>
            <person name="Poch O."/>
            <person name="Schaeffer C."/>
            <person name="Lecompte O."/>
        </authorList>
    </citation>
    <scope>NUCLEOTIDE SEQUENCE [LARGE SCALE GENOMIC DNA]</scope>
    <scope>IDENTIFICATION BY MASS SPECTROMETRY [LARGE SCALE ANALYSIS]</scope>
    <scope>IDENTIFICATION OF N-TERMINUS</scope>
    <source>
        <strain>ATCC 700084 / mc(2)155</strain>
    </source>
</reference>
<gene>
    <name evidence="1" type="primary">rimM</name>
    <name type="ordered locus">MSMEG_2437</name>
    <name type="ordered locus">MSMEI_2376</name>
</gene>
<proteinExistence type="evidence at protein level"/>
<keyword id="KW-0143">Chaperone</keyword>
<keyword id="KW-0963">Cytoplasm</keyword>
<keyword id="KW-1185">Reference proteome</keyword>
<keyword id="KW-0690">Ribosome biogenesis</keyword>
<keyword id="KW-0698">rRNA processing</keyword>
<feature type="chain" id="PRO_1000001197" description="Ribosome maturation factor RimM">
    <location>
        <begin position="1"/>
        <end position="173"/>
    </location>
</feature>
<feature type="domain" description="PRC barrel" evidence="1">
    <location>
        <begin position="95"/>
        <end position="169"/>
    </location>
</feature>
<dbReference type="EMBL" id="CP000480">
    <property type="protein sequence ID" value="ABK71256.1"/>
    <property type="molecule type" value="Genomic_DNA"/>
</dbReference>
<dbReference type="EMBL" id="CP001663">
    <property type="protein sequence ID" value="AFP38844.1"/>
    <property type="molecule type" value="Genomic_DNA"/>
</dbReference>
<dbReference type="RefSeq" id="WP_011728341.1">
    <property type="nucleotide sequence ID" value="NZ_SIJM01000012.1"/>
</dbReference>
<dbReference type="RefSeq" id="YP_886777.1">
    <property type="nucleotide sequence ID" value="NC_008596.1"/>
</dbReference>
<dbReference type="SMR" id="A0QV39"/>
<dbReference type="STRING" id="246196.MSMEG_2437"/>
<dbReference type="PaxDb" id="246196-MSMEI_2376"/>
<dbReference type="GeneID" id="93457228"/>
<dbReference type="KEGG" id="msb:LJ00_12120"/>
<dbReference type="KEGG" id="msg:MSMEI_2376"/>
<dbReference type="KEGG" id="msm:MSMEG_2437"/>
<dbReference type="PATRIC" id="fig|246196.19.peg.2402"/>
<dbReference type="eggNOG" id="COG0806">
    <property type="taxonomic scope" value="Bacteria"/>
</dbReference>
<dbReference type="OrthoDB" id="5381335at2"/>
<dbReference type="Proteomes" id="UP000000757">
    <property type="component" value="Chromosome"/>
</dbReference>
<dbReference type="Proteomes" id="UP000006158">
    <property type="component" value="Chromosome"/>
</dbReference>
<dbReference type="GO" id="GO:0005737">
    <property type="term" value="C:cytoplasm"/>
    <property type="evidence" value="ECO:0007669"/>
    <property type="project" value="UniProtKB-SubCell"/>
</dbReference>
<dbReference type="GO" id="GO:0005840">
    <property type="term" value="C:ribosome"/>
    <property type="evidence" value="ECO:0007669"/>
    <property type="project" value="InterPro"/>
</dbReference>
<dbReference type="GO" id="GO:0043022">
    <property type="term" value="F:ribosome binding"/>
    <property type="evidence" value="ECO:0007669"/>
    <property type="project" value="InterPro"/>
</dbReference>
<dbReference type="GO" id="GO:0042274">
    <property type="term" value="P:ribosomal small subunit biogenesis"/>
    <property type="evidence" value="ECO:0007669"/>
    <property type="project" value="UniProtKB-UniRule"/>
</dbReference>
<dbReference type="GO" id="GO:0006364">
    <property type="term" value="P:rRNA processing"/>
    <property type="evidence" value="ECO:0007669"/>
    <property type="project" value="UniProtKB-UniRule"/>
</dbReference>
<dbReference type="Gene3D" id="2.30.30.240">
    <property type="entry name" value="PRC-barrel domain"/>
    <property type="match status" value="1"/>
</dbReference>
<dbReference type="Gene3D" id="2.40.30.60">
    <property type="entry name" value="RimM"/>
    <property type="match status" value="1"/>
</dbReference>
<dbReference type="HAMAP" id="MF_00014">
    <property type="entry name" value="Ribosome_mat_RimM"/>
    <property type="match status" value="1"/>
</dbReference>
<dbReference type="InterPro" id="IPR027275">
    <property type="entry name" value="PRC-brl_dom"/>
</dbReference>
<dbReference type="InterPro" id="IPR011033">
    <property type="entry name" value="PRC_barrel-like_sf"/>
</dbReference>
<dbReference type="InterPro" id="IPR011961">
    <property type="entry name" value="RimM"/>
</dbReference>
<dbReference type="InterPro" id="IPR002676">
    <property type="entry name" value="RimM_N"/>
</dbReference>
<dbReference type="InterPro" id="IPR036976">
    <property type="entry name" value="RimM_N_sf"/>
</dbReference>
<dbReference type="InterPro" id="IPR009000">
    <property type="entry name" value="Transl_B-barrel_sf"/>
</dbReference>
<dbReference type="NCBIfam" id="TIGR02273">
    <property type="entry name" value="16S_RimM"/>
    <property type="match status" value="1"/>
</dbReference>
<dbReference type="PANTHER" id="PTHR33692">
    <property type="entry name" value="RIBOSOME MATURATION FACTOR RIMM"/>
    <property type="match status" value="1"/>
</dbReference>
<dbReference type="PANTHER" id="PTHR33692:SF1">
    <property type="entry name" value="RIBOSOME MATURATION FACTOR RIMM"/>
    <property type="match status" value="1"/>
</dbReference>
<dbReference type="Pfam" id="PF05239">
    <property type="entry name" value="PRC"/>
    <property type="match status" value="1"/>
</dbReference>
<dbReference type="Pfam" id="PF01782">
    <property type="entry name" value="RimM"/>
    <property type="match status" value="1"/>
</dbReference>
<dbReference type="SUPFAM" id="SSF50346">
    <property type="entry name" value="PRC-barrel domain"/>
    <property type="match status" value="1"/>
</dbReference>
<dbReference type="SUPFAM" id="SSF50447">
    <property type="entry name" value="Translation proteins"/>
    <property type="match status" value="1"/>
</dbReference>